<gene>
    <name type="primary">get3</name>
    <name type="ORF">B11H7.020</name>
    <name type="ORF">NCU06717</name>
</gene>
<reference key="1">
    <citation type="journal article" date="2003" name="Nucleic Acids Res.">
        <title>What's in the genome of a filamentous fungus? Analysis of the Neurospora genome sequence.</title>
        <authorList>
            <person name="Mannhaupt G."/>
            <person name="Montrone C."/>
            <person name="Haase D."/>
            <person name="Mewes H.-W."/>
            <person name="Aign V."/>
            <person name="Hoheisel J.D."/>
            <person name="Fartmann B."/>
            <person name="Nyakatura G."/>
            <person name="Kempken F."/>
            <person name="Maier J."/>
            <person name="Schulte U."/>
        </authorList>
    </citation>
    <scope>NUCLEOTIDE SEQUENCE [LARGE SCALE GENOMIC DNA]</scope>
    <source>
        <strain>ATCC 24698 / 74-OR23-1A / CBS 708.71 / DSM 1257 / FGSC 987</strain>
    </source>
</reference>
<reference key="2">
    <citation type="journal article" date="2003" name="Nature">
        <title>The genome sequence of the filamentous fungus Neurospora crassa.</title>
        <authorList>
            <person name="Galagan J.E."/>
            <person name="Calvo S.E."/>
            <person name="Borkovich K.A."/>
            <person name="Selker E.U."/>
            <person name="Read N.D."/>
            <person name="Jaffe D.B."/>
            <person name="FitzHugh W."/>
            <person name="Ma L.-J."/>
            <person name="Smirnov S."/>
            <person name="Purcell S."/>
            <person name="Rehman B."/>
            <person name="Elkins T."/>
            <person name="Engels R."/>
            <person name="Wang S."/>
            <person name="Nielsen C.B."/>
            <person name="Butler J."/>
            <person name="Endrizzi M."/>
            <person name="Qui D."/>
            <person name="Ianakiev P."/>
            <person name="Bell-Pedersen D."/>
            <person name="Nelson M.A."/>
            <person name="Werner-Washburne M."/>
            <person name="Selitrennikoff C.P."/>
            <person name="Kinsey J.A."/>
            <person name="Braun E.L."/>
            <person name="Zelter A."/>
            <person name="Schulte U."/>
            <person name="Kothe G.O."/>
            <person name="Jedd G."/>
            <person name="Mewes H.-W."/>
            <person name="Staben C."/>
            <person name="Marcotte E."/>
            <person name="Greenberg D."/>
            <person name="Roy A."/>
            <person name="Foley K."/>
            <person name="Naylor J."/>
            <person name="Stange-Thomann N."/>
            <person name="Barrett R."/>
            <person name="Gnerre S."/>
            <person name="Kamal M."/>
            <person name="Kamvysselis M."/>
            <person name="Mauceli E.W."/>
            <person name="Bielke C."/>
            <person name="Rudd S."/>
            <person name="Frishman D."/>
            <person name="Krystofova S."/>
            <person name="Rasmussen C."/>
            <person name="Metzenberg R.L."/>
            <person name="Perkins D.D."/>
            <person name="Kroken S."/>
            <person name="Cogoni C."/>
            <person name="Macino G."/>
            <person name="Catcheside D.E.A."/>
            <person name="Li W."/>
            <person name="Pratt R.J."/>
            <person name="Osmani S.A."/>
            <person name="DeSouza C.P.C."/>
            <person name="Glass N.L."/>
            <person name="Orbach M.J."/>
            <person name="Berglund J.A."/>
            <person name="Voelker R."/>
            <person name="Yarden O."/>
            <person name="Plamann M."/>
            <person name="Seiler S."/>
            <person name="Dunlap J.C."/>
            <person name="Radford A."/>
            <person name="Aramayo R."/>
            <person name="Natvig D.O."/>
            <person name="Alex L.A."/>
            <person name="Mannhaupt G."/>
            <person name="Ebbole D.J."/>
            <person name="Freitag M."/>
            <person name="Paulsen I."/>
            <person name="Sachs M.S."/>
            <person name="Lander E.S."/>
            <person name="Nusbaum C."/>
            <person name="Birren B.W."/>
        </authorList>
    </citation>
    <scope>NUCLEOTIDE SEQUENCE [LARGE SCALE GENOMIC DNA]</scope>
    <source>
        <strain>ATCC 24698 / 74-OR23-1A / CBS 708.71 / DSM 1257 / FGSC 987</strain>
    </source>
</reference>
<dbReference type="EC" id="3.6.-.-" evidence="1"/>
<dbReference type="EMBL" id="BX294092">
    <property type="protein sequence ID" value="CAD71242.1"/>
    <property type="molecule type" value="Genomic_DNA"/>
</dbReference>
<dbReference type="EMBL" id="CM002240">
    <property type="protein sequence ID" value="EAA31661.1"/>
    <property type="molecule type" value="Genomic_DNA"/>
</dbReference>
<dbReference type="RefSeq" id="XP_960897.1">
    <property type="nucleotide sequence ID" value="XM_955804.3"/>
</dbReference>
<dbReference type="SMR" id="Q870U4"/>
<dbReference type="FunCoup" id="Q870U4">
    <property type="interactions" value="957"/>
</dbReference>
<dbReference type="STRING" id="367110.Q870U4"/>
<dbReference type="PaxDb" id="5141-EFNCRP00000006672"/>
<dbReference type="EnsemblFungi" id="EAA31661">
    <property type="protein sequence ID" value="EAA31661"/>
    <property type="gene ID" value="NCU06717"/>
</dbReference>
<dbReference type="GeneID" id="3877035"/>
<dbReference type="KEGG" id="ncr:NCU06717"/>
<dbReference type="VEuPathDB" id="FungiDB:NCU06717"/>
<dbReference type="HOGENOM" id="CLU_040761_0_0_1"/>
<dbReference type="InParanoid" id="Q870U4"/>
<dbReference type="OMA" id="MDAPYEF"/>
<dbReference type="OrthoDB" id="1770at2759"/>
<dbReference type="Proteomes" id="UP000001805">
    <property type="component" value="Chromosome 2, Linkage Group V"/>
</dbReference>
<dbReference type="GO" id="GO:0043529">
    <property type="term" value="C:GET complex"/>
    <property type="evidence" value="ECO:0000318"/>
    <property type="project" value="GO_Central"/>
</dbReference>
<dbReference type="GO" id="GO:0005524">
    <property type="term" value="F:ATP binding"/>
    <property type="evidence" value="ECO:0007669"/>
    <property type="project" value="UniProtKB-UniRule"/>
</dbReference>
<dbReference type="GO" id="GO:0016887">
    <property type="term" value="F:ATP hydrolysis activity"/>
    <property type="evidence" value="ECO:0000318"/>
    <property type="project" value="GO_Central"/>
</dbReference>
<dbReference type="GO" id="GO:0005085">
    <property type="term" value="F:guanyl-nucleotide exchange factor activity"/>
    <property type="evidence" value="ECO:0007669"/>
    <property type="project" value="EnsemblFungi"/>
</dbReference>
<dbReference type="GO" id="GO:0042802">
    <property type="term" value="F:identical protein binding"/>
    <property type="evidence" value="ECO:0007669"/>
    <property type="project" value="EnsemblFungi"/>
</dbReference>
<dbReference type="GO" id="GO:0046872">
    <property type="term" value="F:metal ion binding"/>
    <property type="evidence" value="ECO:0007669"/>
    <property type="project" value="UniProtKB-KW"/>
</dbReference>
<dbReference type="GO" id="GO:0044183">
    <property type="term" value="F:protein folding chaperone"/>
    <property type="evidence" value="ECO:0007669"/>
    <property type="project" value="EnsemblFungi"/>
</dbReference>
<dbReference type="GO" id="GO:0051082">
    <property type="term" value="F:unfolded protein binding"/>
    <property type="evidence" value="ECO:0007669"/>
    <property type="project" value="EnsemblFungi"/>
</dbReference>
<dbReference type="GO" id="GO:0034599">
    <property type="term" value="P:cellular response to oxidative stress"/>
    <property type="evidence" value="ECO:0007669"/>
    <property type="project" value="EnsemblFungi"/>
</dbReference>
<dbReference type="GO" id="GO:0000750">
    <property type="term" value="P:pheromone-dependent signal transduction involved in conjugation with cellular fusion"/>
    <property type="evidence" value="ECO:0007669"/>
    <property type="project" value="EnsemblFungi"/>
</dbReference>
<dbReference type="GO" id="GO:0006620">
    <property type="term" value="P:post-translational protein targeting to endoplasmic reticulum membrane"/>
    <property type="evidence" value="ECO:0007669"/>
    <property type="project" value="EnsemblFungi"/>
</dbReference>
<dbReference type="GO" id="GO:0009408">
    <property type="term" value="P:response to heat"/>
    <property type="evidence" value="ECO:0007669"/>
    <property type="project" value="EnsemblFungi"/>
</dbReference>
<dbReference type="GO" id="GO:0010038">
    <property type="term" value="P:response to metal ion"/>
    <property type="evidence" value="ECO:0007669"/>
    <property type="project" value="EnsemblFungi"/>
</dbReference>
<dbReference type="GO" id="GO:0006890">
    <property type="term" value="P:retrograde vesicle-mediated transport, Golgi to endoplasmic reticulum"/>
    <property type="evidence" value="ECO:0007669"/>
    <property type="project" value="EnsemblFungi"/>
</dbReference>
<dbReference type="GO" id="GO:0071816">
    <property type="term" value="P:tail-anchored membrane protein insertion into ER membrane"/>
    <property type="evidence" value="ECO:0000318"/>
    <property type="project" value="GO_Central"/>
</dbReference>
<dbReference type="CDD" id="cd02035">
    <property type="entry name" value="ArsA"/>
    <property type="match status" value="1"/>
</dbReference>
<dbReference type="FunFam" id="3.40.50.300:FF:000235">
    <property type="entry name" value="ATPase ASNA1"/>
    <property type="match status" value="1"/>
</dbReference>
<dbReference type="Gene3D" id="3.40.50.300">
    <property type="entry name" value="P-loop containing nucleotide triphosphate hydrolases"/>
    <property type="match status" value="1"/>
</dbReference>
<dbReference type="HAMAP" id="MF_03112">
    <property type="entry name" value="Asna1_Get3"/>
    <property type="match status" value="1"/>
</dbReference>
<dbReference type="InterPro" id="IPR025723">
    <property type="entry name" value="Anion-transp_ATPase-like_dom"/>
</dbReference>
<dbReference type="InterPro" id="IPR016300">
    <property type="entry name" value="ATPase_ArsA/GET3"/>
</dbReference>
<dbReference type="InterPro" id="IPR027542">
    <property type="entry name" value="ATPase_ArsA/GET3_euk"/>
</dbReference>
<dbReference type="InterPro" id="IPR027417">
    <property type="entry name" value="P-loop_NTPase"/>
</dbReference>
<dbReference type="NCBIfam" id="TIGR00345">
    <property type="entry name" value="GET3_arsA_TRC40"/>
    <property type="match status" value="1"/>
</dbReference>
<dbReference type="PANTHER" id="PTHR10803">
    <property type="entry name" value="ARSENICAL PUMP-DRIVING ATPASE ARSENITE-TRANSLOCATING ATPASE"/>
    <property type="match status" value="1"/>
</dbReference>
<dbReference type="PANTHER" id="PTHR10803:SF3">
    <property type="entry name" value="ATPASE GET3"/>
    <property type="match status" value="1"/>
</dbReference>
<dbReference type="Pfam" id="PF02374">
    <property type="entry name" value="ArsA_ATPase"/>
    <property type="match status" value="1"/>
</dbReference>
<dbReference type="SUPFAM" id="SSF52540">
    <property type="entry name" value="P-loop containing nucleoside triphosphate hydrolases"/>
    <property type="match status" value="1"/>
</dbReference>
<sequence>MSTAVINADDDHMEPTLQSILDQRSLRWIFVGGKGGVGKTTTSCSLAIQLAKVRRSVLLISTDPAHNLSDAFSQKFGKEARLIDGFDNLSAMEIDPNGSIQDLLAGQGENEGAGDMGGVGGMMQDLAFAIPGIDEAMSFAEVLKQVKSLSYETIIFDTAPTGHTLRFLQFPSVLEKALAKVSQLSSQYGPLLNGFLGSNGTLPNGQNLNEMMEKLETLRATISEVNTQFKDERLTTFVCVCIPEFLSLYETERMIQELASYGIDTHSIVVNQLLFPKPGSDCEQCTARRKMQKKYLDQIEELYDEFNVVKMPLLVEEVRGKEKLEKFSEMLVKPFVPPQ</sequence>
<evidence type="ECO:0000255" key="1">
    <source>
        <dbReference type="HAMAP-Rule" id="MF_03112"/>
    </source>
</evidence>
<keyword id="KW-0067">ATP-binding</keyword>
<keyword id="KW-0963">Cytoplasm</keyword>
<keyword id="KW-0256">Endoplasmic reticulum</keyword>
<keyword id="KW-0378">Hydrolase</keyword>
<keyword id="KW-0479">Metal-binding</keyword>
<keyword id="KW-0547">Nucleotide-binding</keyword>
<keyword id="KW-1185">Reference proteome</keyword>
<keyword id="KW-0813">Transport</keyword>
<keyword id="KW-0862">Zinc</keyword>
<protein>
    <recommendedName>
        <fullName evidence="1">ATPase get3</fullName>
        <ecNumber evidence="1">3.6.-.-</ecNumber>
    </recommendedName>
    <alternativeName>
        <fullName evidence="1">Arsenical pump-driving ATPase</fullName>
    </alternativeName>
    <alternativeName>
        <fullName evidence="1">Arsenite-stimulated ATPase</fullName>
    </alternativeName>
    <alternativeName>
        <fullName evidence="1">Golgi to ER traffic protein 3</fullName>
    </alternativeName>
    <alternativeName>
        <fullName evidence="1">Guided entry of tail-anchored proteins 3</fullName>
    </alternativeName>
</protein>
<feature type="chain" id="PRO_0000388216" description="ATPase get3">
    <location>
        <begin position="1"/>
        <end position="339"/>
    </location>
</feature>
<feature type="active site" evidence="1">
    <location>
        <position position="63"/>
    </location>
</feature>
<feature type="binding site" evidence="1">
    <location>
        <begin position="34"/>
        <end position="41"/>
    </location>
    <ligand>
        <name>ATP</name>
        <dbReference type="ChEBI" id="CHEBI:30616"/>
    </ligand>
</feature>
<feature type="binding site" evidence="1">
    <location>
        <position position="244"/>
    </location>
    <ligand>
        <name>ATP</name>
        <dbReference type="ChEBI" id="CHEBI:30616"/>
    </ligand>
</feature>
<feature type="binding site" evidence="1">
    <location>
        <position position="271"/>
    </location>
    <ligand>
        <name>ATP</name>
        <dbReference type="ChEBI" id="CHEBI:30616"/>
    </ligand>
</feature>
<feature type="binding site" evidence="1">
    <location>
        <position position="282"/>
    </location>
    <ligand>
        <name>Zn(2+)</name>
        <dbReference type="ChEBI" id="CHEBI:29105"/>
        <note>ligand shared between dimeric partners</note>
    </ligand>
</feature>
<feature type="binding site" evidence="1">
    <location>
        <position position="285"/>
    </location>
    <ligand>
        <name>Zn(2+)</name>
        <dbReference type="ChEBI" id="CHEBI:29105"/>
        <note>ligand shared between dimeric partners</note>
    </ligand>
</feature>
<accession>Q870U4</accession>
<name>GET3_NEUCR</name>
<comment type="function">
    <text evidence="1">ATPase required for the post-translational delivery of tail-anchored (TA) proteins to the endoplasmic reticulum. Recognizes and selectively binds the transmembrane domain of TA proteins in the cytosol. This complex then targets to the endoplasmic reticulum by membrane-bound receptors, where the tail-anchored protein is released for insertion. This process is regulated by ATP binding and hydrolysis. ATP binding drives the homodimer towards the closed dimer state, facilitating recognition of newly synthesized TA membrane proteins. ATP hydrolysis is required for insertion. Subsequently, the homodimer reverts towards the open dimer state, lowering its affinity for the membrane-bound receptor, and returning it to the cytosol to initiate a new round of targeting.</text>
</comment>
<comment type="subunit">
    <text evidence="1">Homodimer.</text>
</comment>
<comment type="subcellular location">
    <subcellularLocation>
        <location evidence="1">Cytoplasm</location>
    </subcellularLocation>
    <subcellularLocation>
        <location evidence="1">Endoplasmic reticulum</location>
    </subcellularLocation>
</comment>
<comment type="similarity">
    <text evidence="1">Belongs to the arsA ATPase family.</text>
</comment>
<organism>
    <name type="scientific">Neurospora crassa (strain ATCC 24698 / 74-OR23-1A / CBS 708.71 / DSM 1257 / FGSC 987)</name>
    <dbReference type="NCBI Taxonomy" id="367110"/>
    <lineage>
        <taxon>Eukaryota</taxon>
        <taxon>Fungi</taxon>
        <taxon>Dikarya</taxon>
        <taxon>Ascomycota</taxon>
        <taxon>Pezizomycotina</taxon>
        <taxon>Sordariomycetes</taxon>
        <taxon>Sordariomycetidae</taxon>
        <taxon>Sordariales</taxon>
        <taxon>Sordariaceae</taxon>
        <taxon>Neurospora</taxon>
    </lineage>
</organism>
<proteinExistence type="inferred from homology"/>